<comment type="similarity">
    <text evidence="1">Belongs to the universal ribosomal protein uS9 family.</text>
</comment>
<evidence type="ECO:0000255" key="1">
    <source>
        <dbReference type="HAMAP-Rule" id="MF_00532"/>
    </source>
</evidence>
<evidence type="ECO:0000305" key="2"/>
<feature type="chain" id="PRO_1000128087" description="Small ribosomal subunit protein uS9">
    <location>
        <begin position="1"/>
        <end position="136"/>
    </location>
</feature>
<organism>
    <name type="scientific">Borrelia hermsii (strain HS1 / DAH)</name>
    <dbReference type="NCBI Taxonomy" id="314723"/>
    <lineage>
        <taxon>Bacteria</taxon>
        <taxon>Pseudomonadati</taxon>
        <taxon>Spirochaetota</taxon>
        <taxon>Spirochaetia</taxon>
        <taxon>Spirochaetales</taxon>
        <taxon>Borreliaceae</taxon>
        <taxon>Borrelia</taxon>
    </lineage>
</organism>
<gene>
    <name evidence="1" type="primary">rpsI</name>
    <name type="ordered locus">BH0338</name>
</gene>
<accession>B2S045</accession>
<protein>
    <recommendedName>
        <fullName evidence="1">Small ribosomal subunit protein uS9</fullName>
    </recommendedName>
    <alternativeName>
        <fullName evidence="2">30S ribosomal protein S9</fullName>
    </alternativeName>
</protein>
<proteinExistence type="inferred from homology"/>
<keyword id="KW-0687">Ribonucleoprotein</keyword>
<keyword id="KW-0689">Ribosomal protein</keyword>
<name>RS9_BORHD</name>
<dbReference type="EMBL" id="CP000048">
    <property type="protein sequence ID" value="AAX16851.1"/>
    <property type="molecule type" value="Genomic_DNA"/>
</dbReference>
<dbReference type="RefSeq" id="WP_012422108.1">
    <property type="nucleotide sequence ID" value="NZ_CP073136.1"/>
</dbReference>
<dbReference type="SMR" id="B2S045"/>
<dbReference type="GeneID" id="71843148"/>
<dbReference type="KEGG" id="bhr:BH0338"/>
<dbReference type="HOGENOM" id="CLU_046483_2_1_12"/>
<dbReference type="Proteomes" id="UP000008834">
    <property type="component" value="Chromosome"/>
</dbReference>
<dbReference type="GO" id="GO:0022627">
    <property type="term" value="C:cytosolic small ribosomal subunit"/>
    <property type="evidence" value="ECO:0007669"/>
    <property type="project" value="TreeGrafter"/>
</dbReference>
<dbReference type="GO" id="GO:0003723">
    <property type="term" value="F:RNA binding"/>
    <property type="evidence" value="ECO:0007669"/>
    <property type="project" value="TreeGrafter"/>
</dbReference>
<dbReference type="GO" id="GO:0003735">
    <property type="term" value="F:structural constituent of ribosome"/>
    <property type="evidence" value="ECO:0007669"/>
    <property type="project" value="InterPro"/>
</dbReference>
<dbReference type="GO" id="GO:0006412">
    <property type="term" value="P:translation"/>
    <property type="evidence" value="ECO:0007669"/>
    <property type="project" value="UniProtKB-UniRule"/>
</dbReference>
<dbReference type="FunFam" id="3.30.230.10:FF:000001">
    <property type="entry name" value="30S ribosomal protein S9"/>
    <property type="match status" value="1"/>
</dbReference>
<dbReference type="Gene3D" id="3.30.230.10">
    <property type="match status" value="1"/>
</dbReference>
<dbReference type="HAMAP" id="MF_00532_B">
    <property type="entry name" value="Ribosomal_uS9_B"/>
    <property type="match status" value="1"/>
</dbReference>
<dbReference type="InterPro" id="IPR020568">
    <property type="entry name" value="Ribosomal_Su5_D2-typ_SF"/>
</dbReference>
<dbReference type="InterPro" id="IPR000754">
    <property type="entry name" value="Ribosomal_uS9"/>
</dbReference>
<dbReference type="InterPro" id="IPR023035">
    <property type="entry name" value="Ribosomal_uS9_bac/plastid"/>
</dbReference>
<dbReference type="InterPro" id="IPR020574">
    <property type="entry name" value="Ribosomal_uS9_CS"/>
</dbReference>
<dbReference type="InterPro" id="IPR014721">
    <property type="entry name" value="Ribsml_uS5_D2-typ_fold_subgr"/>
</dbReference>
<dbReference type="NCBIfam" id="NF001099">
    <property type="entry name" value="PRK00132.1"/>
    <property type="match status" value="1"/>
</dbReference>
<dbReference type="PANTHER" id="PTHR21569">
    <property type="entry name" value="RIBOSOMAL PROTEIN S9"/>
    <property type="match status" value="1"/>
</dbReference>
<dbReference type="PANTHER" id="PTHR21569:SF1">
    <property type="entry name" value="SMALL RIBOSOMAL SUBUNIT PROTEIN US9M"/>
    <property type="match status" value="1"/>
</dbReference>
<dbReference type="Pfam" id="PF00380">
    <property type="entry name" value="Ribosomal_S9"/>
    <property type="match status" value="1"/>
</dbReference>
<dbReference type="SUPFAM" id="SSF54211">
    <property type="entry name" value="Ribosomal protein S5 domain 2-like"/>
    <property type="match status" value="1"/>
</dbReference>
<dbReference type="PROSITE" id="PS00360">
    <property type="entry name" value="RIBOSOMAL_S9"/>
    <property type="match status" value="1"/>
</dbReference>
<reference key="1">
    <citation type="submission" date="2004-12" db="EMBL/GenBank/DDBJ databases">
        <title>The genome sequence of Borrelia hermsii and Borrelia turicatae: comparative analysis of two agents of endemic N. America relapsing fever.</title>
        <authorList>
            <person name="Porcella S.F."/>
            <person name="Raffel S.J."/>
            <person name="Schrumpf M.E."/>
            <person name="Montgomery B."/>
            <person name="Smith T."/>
            <person name="Schwan T.G."/>
        </authorList>
    </citation>
    <scope>NUCLEOTIDE SEQUENCE [LARGE SCALE GENOMIC DNA]</scope>
    <source>
        <strain>HS1 / DAH</strain>
    </source>
</reference>
<sequence length="136" mass="15311">MAKSDVKGINLGMGTGRRKSSVARVYIREGKGDIKINSRDFDSYMQLEKLKTIALSPLVLTNTLGKYDLYINIYGGGISGQAGAIRHGIARALFNLDEEHKMILKSNGFLTRDPRKVERKKFGKKKARKSFQFSKR</sequence>